<proteinExistence type="evidence at protein level"/>
<accession>P11749</accession>
<keyword id="KW-0903">Direct protein sequencing</keyword>
<keyword id="KW-0349">Heme</keyword>
<keyword id="KW-0408">Iron</keyword>
<keyword id="KW-0479">Metal-binding</keyword>
<keyword id="KW-0561">Oxygen transport</keyword>
<keyword id="KW-0813">Transport</keyword>
<gene>
    <name type="primary">hbb</name>
</gene>
<feature type="chain" id="PRO_0000053130" description="Hemoglobin subunit beta">
    <location>
        <begin position="1"/>
        <end position="146"/>
    </location>
</feature>
<feature type="domain" description="Globin" evidence="1">
    <location>
        <begin position="2"/>
        <end position="146"/>
    </location>
</feature>
<feature type="binding site" description="distal binding residue">
    <location>
        <position position="63"/>
    </location>
    <ligand>
        <name>heme b</name>
        <dbReference type="ChEBI" id="CHEBI:60344"/>
    </ligand>
    <ligandPart>
        <name>Fe</name>
        <dbReference type="ChEBI" id="CHEBI:18248"/>
    </ligandPart>
</feature>
<feature type="binding site" description="proximal binding residue">
    <location>
        <position position="92"/>
    </location>
    <ligand>
        <name>heme b</name>
        <dbReference type="ChEBI" id="CHEBI:60344"/>
    </ligand>
    <ligandPart>
        <name>Fe</name>
        <dbReference type="ChEBI" id="CHEBI:18248"/>
    </ligandPart>
</feature>
<reference key="1">
    <citation type="journal article" date="1987" name="Biol. Chem. Hoppe-Seyler">
        <title>Homeothermic fish and hemoglobin: primary structure of the hemoglobin from bluefin tuna (Thunnus thynnus, Scromboidei).</title>
        <authorList>
            <person name="Rodewald K."/>
            <person name="Oberthur W."/>
            <person name="Braunitzer G."/>
        </authorList>
    </citation>
    <scope>PROTEIN SEQUENCE</scope>
</reference>
<name>HBB_THUTH</name>
<dbReference type="PIR" id="B29701">
    <property type="entry name" value="B29701"/>
</dbReference>
<dbReference type="SMR" id="P11749"/>
<dbReference type="GO" id="GO:0072562">
    <property type="term" value="C:blood microparticle"/>
    <property type="evidence" value="ECO:0007669"/>
    <property type="project" value="TreeGrafter"/>
</dbReference>
<dbReference type="GO" id="GO:0031838">
    <property type="term" value="C:haptoglobin-hemoglobin complex"/>
    <property type="evidence" value="ECO:0007669"/>
    <property type="project" value="TreeGrafter"/>
</dbReference>
<dbReference type="GO" id="GO:0005833">
    <property type="term" value="C:hemoglobin complex"/>
    <property type="evidence" value="ECO:0007669"/>
    <property type="project" value="InterPro"/>
</dbReference>
<dbReference type="GO" id="GO:0031720">
    <property type="term" value="F:haptoglobin binding"/>
    <property type="evidence" value="ECO:0007669"/>
    <property type="project" value="TreeGrafter"/>
</dbReference>
<dbReference type="GO" id="GO:0020037">
    <property type="term" value="F:heme binding"/>
    <property type="evidence" value="ECO:0007669"/>
    <property type="project" value="InterPro"/>
</dbReference>
<dbReference type="GO" id="GO:0046872">
    <property type="term" value="F:metal ion binding"/>
    <property type="evidence" value="ECO:0007669"/>
    <property type="project" value="UniProtKB-KW"/>
</dbReference>
<dbReference type="GO" id="GO:0043177">
    <property type="term" value="F:organic acid binding"/>
    <property type="evidence" value="ECO:0007669"/>
    <property type="project" value="TreeGrafter"/>
</dbReference>
<dbReference type="GO" id="GO:0019825">
    <property type="term" value="F:oxygen binding"/>
    <property type="evidence" value="ECO:0007669"/>
    <property type="project" value="InterPro"/>
</dbReference>
<dbReference type="GO" id="GO:0005344">
    <property type="term" value="F:oxygen carrier activity"/>
    <property type="evidence" value="ECO:0007669"/>
    <property type="project" value="UniProtKB-KW"/>
</dbReference>
<dbReference type="GO" id="GO:0004601">
    <property type="term" value="F:peroxidase activity"/>
    <property type="evidence" value="ECO:0007669"/>
    <property type="project" value="TreeGrafter"/>
</dbReference>
<dbReference type="GO" id="GO:0042744">
    <property type="term" value="P:hydrogen peroxide catabolic process"/>
    <property type="evidence" value="ECO:0007669"/>
    <property type="project" value="TreeGrafter"/>
</dbReference>
<dbReference type="CDD" id="cd08925">
    <property type="entry name" value="Hb-beta-like"/>
    <property type="match status" value="1"/>
</dbReference>
<dbReference type="FunFam" id="1.10.490.10:FF:000001">
    <property type="entry name" value="Hemoglobin subunit beta"/>
    <property type="match status" value="1"/>
</dbReference>
<dbReference type="Gene3D" id="1.10.490.10">
    <property type="entry name" value="Globins"/>
    <property type="match status" value="1"/>
</dbReference>
<dbReference type="InterPro" id="IPR000971">
    <property type="entry name" value="Globin"/>
</dbReference>
<dbReference type="InterPro" id="IPR009050">
    <property type="entry name" value="Globin-like_sf"/>
</dbReference>
<dbReference type="InterPro" id="IPR012292">
    <property type="entry name" value="Globin/Proto"/>
</dbReference>
<dbReference type="InterPro" id="IPR002337">
    <property type="entry name" value="Hemoglobin_b"/>
</dbReference>
<dbReference type="InterPro" id="IPR050056">
    <property type="entry name" value="Hemoglobin_oxygen_transport"/>
</dbReference>
<dbReference type="PANTHER" id="PTHR11442">
    <property type="entry name" value="HEMOGLOBIN FAMILY MEMBER"/>
    <property type="match status" value="1"/>
</dbReference>
<dbReference type="PANTHER" id="PTHR11442:SF7">
    <property type="entry name" value="HEMOGLOBIN SUBUNIT EPSILON"/>
    <property type="match status" value="1"/>
</dbReference>
<dbReference type="Pfam" id="PF00042">
    <property type="entry name" value="Globin"/>
    <property type="match status" value="1"/>
</dbReference>
<dbReference type="PRINTS" id="PR00814">
    <property type="entry name" value="BETAHAEM"/>
</dbReference>
<dbReference type="SUPFAM" id="SSF46458">
    <property type="entry name" value="Globin-like"/>
    <property type="match status" value="1"/>
</dbReference>
<dbReference type="PROSITE" id="PS01033">
    <property type="entry name" value="GLOBIN"/>
    <property type="match status" value="1"/>
</dbReference>
<comment type="function">
    <text>Involved in oxygen transport from gills to the various peripheral tissues.</text>
</comment>
<comment type="subunit">
    <text>Heterotetramer of two alpha chains and two beta chains.</text>
</comment>
<comment type="tissue specificity">
    <text>Red blood cells.</text>
</comment>
<comment type="similarity">
    <text evidence="1">Belongs to the globin family.</text>
</comment>
<sequence>VEWTQQERSIIAGFIANLNYEDIGPKALARCLIVYPWTQRYFGAYGDLSTPDAIKGNAKIAAHGVKVLHGLDRAVKNMDNINEAYSELSVLHSDKLHVDPDNFRILGDCLTVVIAANLGDAFTVETQCAFQKFLAVVVFALGRKYH</sequence>
<protein>
    <recommendedName>
        <fullName>Hemoglobin subunit beta</fullName>
    </recommendedName>
    <alternativeName>
        <fullName>Beta-globin</fullName>
    </alternativeName>
    <alternativeName>
        <fullName>Hemoglobin beta chain</fullName>
    </alternativeName>
</protein>
<organism>
    <name type="scientific">Thunnus thynnus</name>
    <name type="common">Atlantic bluefin tuna</name>
    <name type="synonym">Scomber thynnus</name>
    <dbReference type="NCBI Taxonomy" id="8237"/>
    <lineage>
        <taxon>Eukaryota</taxon>
        <taxon>Metazoa</taxon>
        <taxon>Chordata</taxon>
        <taxon>Craniata</taxon>
        <taxon>Vertebrata</taxon>
        <taxon>Euteleostomi</taxon>
        <taxon>Actinopterygii</taxon>
        <taxon>Neopterygii</taxon>
        <taxon>Teleostei</taxon>
        <taxon>Neoteleostei</taxon>
        <taxon>Acanthomorphata</taxon>
        <taxon>Pelagiaria</taxon>
        <taxon>Scombriformes</taxon>
        <taxon>Scombridae</taxon>
        <taxon>Thunnus</taxon>
    </lineage>
</organism>
<evidence type="ECO:0000255" key="1">
    <source>
        <dbReference type="PROSITE-ProRule" id="PRU00238"/>
    </source>
</evidence>